<gene>
    <name evidence="1" type="primary">rpmE2</name>
    <name type="ordered locus">LJ_0268</name>
</gene>
<organism>
    <name type="scientific">Lactobacillus johnsonii (strain CNCM I-12250 / La1 / NCC 533)</name>
    <dbReference type="NCBI Taxonomy" id="257314"/>
    <lineage>
        <taxon>Bacteria</taxon>
        <taxon>Bacillati</taxon>
        <taxon>Bacillota</taxon>
        <taxon>Bacilli</taxon>
        <taxon>Lactobacillales</taxon>
        <taxon>Lactobacillaceae</taxon>
        <taxon>Lactobacillus</taxon>
    </lineage>
</organism>
<feature type="chain" id="PRO_0000173230" description="Large ribosomal subunit protein bL31B">
    <location>
        <begin position="1"/>
        <end position="83"/>
    </location>
</feature>
<sequence>MRKGIHPDYQEVVFMDSATGAKFVAGSTLKPEETIEFEGKTYPLVRVEISSDSHPFYTGKQKFAQADGRIEKFNKKYGMSSKN</sequence>
<accession>Q74LB6</accession>
<reference key="1">
    <citation type="journal article" date="2004" name="Proc. Natl. Acad. Sci. U.S.A.">
        <title>The genome sequence of the probiotic intestinal bacterium Lactobacillus johnsonii NCC 533.</title>
        <authorList>
            <person name="Pridmore R.D."/>
            <person name="Berger B."/>
            <person name="Desiere F."/>
            <person name="Vilanova D."/>
            <person name="Barretto C."/>
            <person name="Pittet A.-C."/>
            <person name="Zwahlen M.-C."/>
            <person name="Rouvet M."/>
            <person name="Altermann E."/>
            <person name="Barrangou R."/>
            <person name="Mollet B."/>
            <person name="Mercenier A."/>
            <person name="Klaenhammer T."/>
            <person name="Arigoni F."/>
            <person name="Schell M.A."/>
        </authorList>
    </citation>
    <scope>NUCLEOTIDE SEQUENCE [LARGE SCALE GENOMIC DNA]</scope>
    <source>
        <strain>CNCM I-1225 / La1 / NCC 533</strain>
    </source>
</reference>
<proteinExistence type="inferred from homology"/>
<name>RL31B_LACJO</name>
<protein>
    <recommendedName>
        <fullName evidence="1">Large ribosomal subunit protein bL31B</fullName>
    </recommendedName>
    <alternativeName>
        <fullName evidence="2">50S ribosomal protein L31 type B</fullName>
    </alternativeName>
</protein>
<keyword id="KW-0687">Ribonucleoprotein</keyword>
<keyword id="KW-0689">Ribosomal protein</keyword>
<evidence type="ECO:0000255" key="1">
    <source>
        <dbReference type="HAMAP-Rule" id="MF_00502"/>
    </source>
</evidence>
<evidence type="ECO:0000305" key="2"/>
<comment type="subunit">
    <text evidence="1">Part of the 50S ribosomal subunit.</text>
</comment>
<comment type="similarity">
    <text evidence="1">Belongs to the bacterial ribosomal protein bL31 family. Type B subfamily.</text>
</comment>
<dbReference type="EMBL" id="AE017198">
    <property type="protein sequence ID" value="AAS08251.1"/>
    <property type="molecule type" value="Genomic_DNA"/>
</dbReference>
<dbReference type="RefSeq" id="WP_004898881.1">
    <property type="nucleotide sequence ID" value="NC_005362.1"/>
</dbReference>
<dbReference type="SMR" id="Q74LB6"/>
<dbReference type="KEGG" id="ljo:LJ_0268"/>
<dbReference type="eggNOG" id="COG0254">
    <property type="taxonomic scope" value="Bacteria"/>
</dbReference>
<dbReference type="HOGENOM" id="CLU_114306_2_1_9"/>
<dbReference type="Proteomes" id="UP000000581">
    <property type="component" value="Chromosome"/>
</dbReference>
<dbReference type="GO" id="GO:1990904">
    <property type="term" value="C:ribonucleoprotein complex"/>
    <property type="evidence" value="ECO:0007669"/>
    <property type="project" value="UniProtKB-KW"/>
</dbReference>
<dbReference type="GO" id="GO:0005840">
    <property type="term" value="C:ribosome"/>
    <property type="evidence" value="ECO:0007669"/>
    <property type="project" value="UniProtKB-KW"/>
</dbReference>
<dbReference type="GO" id="GO:0003735">
    <property type="term" value="F:structural constituent of ribosome"/>
    <property type="evidence" value="ECO:0007669"/>
    <property type="project" value="InterPro"/>
</dbReference>
<dbReference type="GO" id="GO:0006412">
    <property type="term" value="P:translation"/>
    <property type="evidence" value="ECO:0007669"/>
    <property type="project" value="UniProtKB-UniRule"/>
</dbReference>
<dbReference type="Gene3D" id="4.10.830.30">
    <property type="entry name" value="Ribosomal protein L31"/>
    <property type="match status" value="1"/>
</dbReference>
<dbReference type="HAMAP" id="MF_00502">
    <property type="entry name" value="Ribosomal_bL31_2"/>
    <property type="match status" value="1"/>
</dbReference>
<dbReference type="InterPro" id="IPR034704">
    <property type="entry name" value="Ribosomal_bL28/bL31-like_sf"/>
</dbReference>
<dbReference type="InterPro" id="IPR002150">
    <property type="entry name" value="Ribosomal_bL31"/>
</dbReference>
<dbReference type="InterPro" id="IPR027493">
    <property type="entry name" value="Ribosomal_bL31_B"/>
</dbReference>
<dbReference type="InterPro" id="IPR042105">
    <property type="entry name" value="Ribosomal_bL31_sf"/>
</dbReference>
<dbReference type="NCBIfam" id="TIGR00105">
    <property type="entry name" value="L31"/>
    <property type="match status" value="1"/>
</dbReference>
<dbReference type="NCBIfam" id="NF002462">
    <property type="entry name" value="PRK01678.1"/>
    <property type="match status" value="1"/>
</dbReference>
<dbReference type="PANTHER" id="PTHR33280">
    <property type="entry name" value="50S RIBOSOMAL PROTEIN L31, CHLOROPLASTIC"/>
    <property type="match status" value="1"/>
</dbReference>
<dbReference type="PANTHER" id="PTHR33280:SF1">
    <property type="entry name" value="LARGE RIBOSOMAL SUBUNIT PROTEIN BL31C"/>
    <property type="match status" value="1"/>
</dbReference>
<dbReference type="Pfam" id="PF01197">
    <property type="entry name" value="Ribosomal_L31"/>
    <property type="match status" value="1"/>
</dbReference>
<dbReference type="PRINTS" id="PR01249">
    <property type="entry name" value="RIBOSOMALL31"/>
</dbReference>
<dbReference type="SUPFAM" id="SSF143800">
    <property type="entry name" value="L28p-like"/>
    <property type="match status" value="1"/>
</dbReference>
<dbReference type="PROSITE" id="PS01143">
    <property type="entry name" value="RIBOSOMAL_L31"/>
    <property type="match status" value="1"/>
</dbReference>